<name>FTNA_ECOL6</name>
<protein>
    <recommendedName>
        <fullName>Bacterial non-heme ferritin</fullName>
        <ecNumber>1.16.3.2</ecNumber>
    </recommendedName>
    <alternativeName>
        <fullName>Ferritin-1</fullName>
    </alternativeName>
</protein>
<evidence type="ECO:0000250" key="1"/>
<evidence type="ECO:0000255" key="2">
    <source>
        <dbReference type="PROSITE-ProRule" id="PRU00085"/>
    </source>
</evidence>
<evidence type="ECO:0000305" key="3"/>
<accession>P0A999</accession>
<accession>P23887</accession>
<keyword id="KW-0963">Cytoplasm</keyword>
<keyword id="KW-0408">Iron</keyword>
<keyword id="KW-0409">Iron storage</keyword>
<keyword id="KW-0479">Metal-binding</keyword>
<keyword id="KW-0560">Oxidoreductase</keyword>
<keyword id="KW-1185">Reference proteome</keyword>
<reference key="1">
    <citation type="journal article" date="2002" name="Proc. Natl. Acad. Sci. U.S.A.">
        <title>Extensive mosaic structure revealed by the complete genome sequence of uropathogenic Escherichia coli.</title>
        <authorList>
            <person name="Welch R.A."/>
            <person name="Burland V."/>
            <person name="Plunkett G. III"/>
            <person name="Redford P."/>
            <person name="Roesch P."/>
            <person name="Rasko D."/>
            <person name="Buckles E.L."/>
            <person name="Liou S.-R."/>
            <person name="Boutin A."/>
            <person name="Hackett J."/>
            <person name="Stroud D."/>
            <person name="Mayhew G.F."/>
            <person name="Rose D.J."/>
            <person name="Zhou S."/>
            <person name="Schwartz D.C."/>
            <person name="Perna N.T."/>
            <person name="Mobley H.L.T."/>
            <person name="Donnenberg M.S."/>
            <person name="Blattner F.R."/>
        </authorList>
    </citation>
    <scope>NUCLEOTIDE SEQUENCE [LARGE SCALE GENOMIC DNA]</scope>
    <source>
        <strain>CFT073 / ATCC 700928 / UPEC</strain>
    </source>
</reference>
<dbReference type="EC" id="1.16.3.2"/>
<dbReference type="EMBL" id="AE014075">
    <property type="protein sequence ID" value="AAN80780.1"/>
    <property type="status" value="ALT_INIT"/>
    <property type="molecule type" value="Genomic_DNA"/>
</dbReference>
<dbReference type="RefSeq" id="WP_000917208.1">
    <property type="nucleotide sequence ID" value="NZ_CP051263.1"/>
</dbReference>
<dbReference type="SMR" id="P0A999"/>
<dbReference type="STRING" id="199310.c2321"/>
<dbReference type="GeneID" id="93776210"/>
<dbReference type="KEGG" id="ecc:c2321"/>
<dbReference type="eggNOG" id="COG1528">
    <property type="taxonomic scope" value="Bacteria"/>
</dbReference>
<dbReference type="HOGENOM" id="CLU_065681_1_0_6"/>
<dbReference type="Proteomes" id="UP000001410">
    <property type="component" value="Chromosome"/>
</dbReference>
<dbReference type="GO" id="GO:0005829">
    <property type="term" value="C:cytosol"/>
    <property type="evidence" value="ECO:0007669"/>
    <property type="project" value="TreeGrafter"/>
</dbReference>
<dbReference type="GO" id="GO:0008199">
    <property type="term" value="F:ferric iron binding"/>
    <property type="evidence" value="ECO:0007669"/>
    <property type="project" value="InterPro"/>
</dbReference>
<dbReference type="GO" id="GO:0008198">
    <property type="term" value="F:ferrous iron binding"/>
    <property type="evidence" value="ECO:0007669"/>
    <property type="project" value="TreeGrafter"/>
</dbReference>
<dbReference type="GO" id="GO:0004322">
    <property type="term" value="F:ferroxidase activity"/>
    <property type="evidence" value="ECO:0007669"/>
    <property type="project" value="TreeGrafter"/>
</dbReference>
<dbReference type="GO" id="GO:0006879">
    <property type="term" value="P:intracellular iron ion homeostasis"/>
    <property type="evidence" value="ECO:0007669"/>
    <property type="project" value="UniProtKB-KW"/>
</dbReference>
<dbReference type="GO" id="GO:0006826">
    <property type="term" value="P:iron ion transport"/>
    <property type="evidence" value="ECO:0007669"/>
    <property type="project" value="InterPro"/>
</dbReference>
<dbReference type="CDD" id="cd01055">
    <property type="entry name" value="Nonheme_Ferritin"/>
    <property type="match status" value="1"/>
</dbReference>
<dbReference type="FunFam" id="1.20.1260.10:FF:000001">
    <property type="entry name" value="Non-heme ferritin"/>
    <property type="match status" value="1"/>
</dbReference>
<dbReference type="Gene3D" id="1.20.1260.10">
    <property type="match status" value="1"/>
</dbReference>
<dbReference type="InterPro" id="IPR001519">
    <property type="entry name" value="Ferritin"/>
</dbReference>
<dbReference type="InterPro" id="IPR012347">
    <property type="entry name" value="Ferritin-like"/>
</dbReference>
<dbReference type="InterPro" id="IPR009040">
    <property type="entry name" value="Ferritin-like_diiron"/>
</dbReference>
<dbReference type="InterPro" id="IPR009078">
    <property type="entry name" value="Ferritin-like_SF"/>
</dbReference>
<dbReference type="InterPro" id="IPR008331">
    <property type="entry name" value="Ferritin_DPS_dom"/>
</dbReference>
<dbReference type="InterPro" id="IPR041719">
    <property type="entry name" value="Ferritin_prok"/>
</dbReference>
<dbReference type="NCBIfam" id="NF007638">
    <property type="entry name" value="PRK10304.1"/>
    <property type="match status" value="1"/>
</dbReference>
<dbReference type="PANTHER" id="PTHR11431:SF127">
    <property type="entry name" value="BACTERIAL NON-HEME FERRITIN"/>
    <property type="match status" value="1"/>
</dbReference>
<dbReference type="PANTHER" id="PTHR11431">
    <property type="entry name" value="FERRITIN"/>
    <property type="match status" value="1"/>
</dbReference>
<dbReference type="Pfam" id="PF00210">
    <property type="entry name" value="Ferritin"/>
    <property type="match status" value="1"/>
</dbReference>
<dbReference type="SUPFAM" id="SSF47240">
    <property type="entry name" value="Ferritin-like"/>
    <property type="match status" value="1"/>
</dbReference>
<dbReference type="PROSITE" id="PS50905">
    <property type="entry name" value="FERRITIN_LIKE"/>
    <property type="match status" value="1"/>
</dbReference>
<comment type="function">
    <text evidence="1">Iron-storage protein.</text>
</comment>
<comment type="catalytic activity">
    <reaction>
        <text>4 Fe(2+) + O2 + 6 H2O = 4 iron(III) oxide-hydroxide + 12 H(+)</text>
        <dbReference type="Rhea" id="RHEA:11972"/>
        <dbReference type="ChEBI" id="CHEBI:15377"/>
        <dbReference type="ChEBI" id="CHEBI:15378"/>
        <dbReference type="ChEBI" id="CHEBI:15379"/>
        <dbReference type="ChEBI" id="CHEBI:29033"/>
        <dbReference type="ChEBI" id="CHEBI:78619"/>
        <dbReference type="EC" id="1.16.3.2"/>
    </reaction>
</comment>
<comment type="subunit">
    <text evidence="1">Homooligomer of 24 subunits that assemble into a spherical protein shell (12 +/- 1 nM diameter) that can sequester at least 2000 iron atoms.</text>
</comment>
<comment type="subcellular location">
    <subcellularLocation>
        <location evidence="1">Cytoplasm</location>
    </subcellularLocation>
</comment>
<comment type="similarity">
    <text evidence="3">Belongs to the ferritin family. Prokaryotic subfamily.</text>
</comment>
<comment type="sequence caution" evidence="3">
    <conflict type="erroneous initiation">
        <sequence resource="EMBL-CDS" id="AAN80780"/>
    </conflict>
    <text>Extended N-terminus.</text>
</comment>
<gene>
    <name type="primary">ftnA</name>
    <name type="ordered locus">c2321</name>
</gene>
<proteinExistence type="inferred from homology"/>
<organism>
    <name type="scientific">Escherichia coli O6:H1 (strain CFT073 / ATCC 700928 / UPEC)</name>
    <dbReference type="NCBI Taxonomy" id="199310"/>
    <lineage>
        <taxon>Bacteria</taxon>
        <taxon>Pseudomonadati</taxon>
        <taxon>Pseudomonadota</taxon>
        <taxon>Gammaproteobacteria</taxon>
        <taxon>Enterobacterales</taxon>
        <taxon>Enterobacteriaceae</taxon>
        <taxon>Escherichia</taxon>
    </lineage>
</organism>
<feature type="chain" id="PRO_0000201087" description="Bacterial non-heme ferritin">
    <location>
        <begin position="1"/>
        <end position="165"/>
    </location>
</feature>
<feature type="domain" description="Ferritin-like diiron" evidence="2">
    <location>
        <begin position="1"/>
        <end position="145"/>
    </location>
</feature>
<feature type="binding site" evidence="2">
    <location>
        <position position="17"/>
    </location>
    <ligand>
        <name>Fe cation</name>
        <dbReference type="ChEBI" id="CHEBI:24875"/>
        <label>1</label>
    </ligand>
</feature>
<feature type="binding site" evidence="2">
    <location>
        <position position="49"/>
    </location>
    <ligand>
        <name>Fe cation</name>
        <dbReference type="ChEBI" id="CHEBI:24875"/>
        <label>3</label>
    </ligand>
</feature>
<feature type="binding site" evidence="2">
    <location>
        <position position="50"/>
    </location>
    <ligand>
        <name>Fe cation</name>
        <dbReference type="ChEBI" id="CHEBI:24875"/>
        <label>1</label>
    </ligand>
</feature>
<feature type="binding site" evidence="2">
    <location>
        <position position="50"/>
    </location>
    <ligand>
        <name>Fe cation</name>
        <dbReference type="ChEBI" id="CHEBI:24875"/>
        <label>2</label>
    </ligand>
</feature>
<feature type="binding site" evidence="2">
    <location>
        <position position="53"/>
    </location>
    <ligand>
        <name>Fe cation</name>
        <dbReference type="ChEBI" id="CHEBI:24875"/>
        <label>1</label>
    </ligand>
</feature>
<feature type="binding site" evidence="2">
    <location>
        <position position="94"/>
    </location>
    <ligand>
        <name>Fe cation</name>
        <dbReference type="ChEBI" id="CHEBI:24875"/>
        <label>2</label>
    </ligand>
</feature>
<feature type="binding site" evidence="2">
    <location>
        <position position="126"/>
    </location>
    <ligand>
        <name>Fe cation</name>
        <dbReference type="ChEBI" id="CHEBI:24875"/>
        <label>3</label>
    </ligand>
</feature>
<feature type="binding site" evidence="2">
    <location>
        <position position="127"/>
    </location>
    <ligand>
        <name>Fe cation</name>
        <dbReference type="ChEBI" id="CHEBI:24875"/>
        <label>2</label>
    </ligand>
</feature>
<feature type="binding site" evidence="2">
    <location>
        <position position="130"/>
    </location>
    <ligand>
        <name>Fe cation</name>
        <dbReference type="ChEBI" id="CHEBI:24875"/>
        <label>2</label>
    </ligand>
</feature>
<feature type="binding site" evidence="2">
    <location>
        <position position="130"/>
    </location>
    <ligand>
        <name>Fe cation</name>
        <dbReference type="ChEBI" id="CHEBI:24875"/>
        <label>3</label>
    </ligand>
</feature>
<sequence>MLKPEMIEKLNEQMNLELYSSLLYQQMSAWCSYHTFEGAAAFLRRHAQEEMTHMQRLFDYLTDTGNLPRINTVESPFAEYSSLDELFQETYKHEQLITQKINELAHAAMTNQDYPTFNFLQWYVSEQHEEEKLFKSIIDKLSLAGKSGEGLYFIDKELSTLDTQN</sequence>